<gene>
    <name type="primary">lifO</name>
    <name type="synonym">lipB</name>
    <name type="ordered locus">PD_0466</name>
</gene>
<comment type="function">
    <text evidence="1">May be involved in the folding of the extracellular lipase during its passage through the periplasm.</text>
</comment>
<comment type="subcellular location">
    <subcellularLocation>
        <location evidence="1">Cell inner membrane</location>
        <topology evidence="1">Single-pass membrane protein</topology>
        <orientation evidence="1">Periplasmic side</orientation>
    </subcellularLocation>
</comment>
<comment type="similarity">
    <text evidence="3">Belongs to the lipase chaperone family.</text>
</comment>
<protein>
    <recommendedName>
        <fullName>Lipase chaperone</fullName>
    </recommendedName>
    <alternativeName>
        <fullName>Lipase activator protein</fullName>
    </alternativeName>
    <alternativeName>
        <fullName>Lipase foldase</fullName>
    </alternativeName>
    <alternativeName>
        <fullName>Lipase helper protein</fullName>
    </alternativeName>
    <alternativeName>
        <fullName>Lipase modulator</fullName>
    </alternativeName>
</protein>
<name>LIFO_XYLFT</name>
<proteinExistence type="inferred from homology"/>
<dbReference type="EMBL" id="AE009442">
    <property type="protein sequence ID" value="AAO28345.1"/>
    <property type="molecule type" value="Genomic_DNA"/>
</dbReference>
<dbReference type="RefSeq" id="WP_011097653.1">
    <property type="nucleotide sequence ID" value="NC_004556.1"/>
</dbReference>
<dbReference type="SMR" id="Q87E55"/>
<dbReference type="KEGG" id="xft:PD_0466"/>
<dbReference type="HOGENOM" id="CLU_064928_1_0_6"/>
<dbReference type="Proteomes" id="UP000002516">
    <property type="component" value="Chromosome"/>
</dbReference>
<dbReference type="GO" id="GO:0005886">
    <property type="term" value="C:plasma membrane"/>
    <property type="evidence" value="ECO:0007669"/>
    <property type="project" value="UniProtKB-SubCell"/>
</dbReference>
<dbReference type="GO" id="GO:0051082">
    <property type="term" value="F:unfolded protein binding"/>
    <property type="evidence" value="ECO:0007669"/>
    <property type="project" value="UniProtKB-UniRule"/>
</dbReference>
<dbReference type="GO" id="GO:0016042">
    <property type="term" value="P:lipid catabolic process"/>
    <property type="evidence" value="ECO:0007669"/>
    <property type="project" value="UniProtKB-UniRule"/>
</dbReference>
<dbReference type="GO" id="GO:0006457">
    <property type="term" value="P:protein folding"/>
    <property type="evidence" value="ECO:0007669"/>
    <property type="project" value="UniProtKB-UniRule"/>
</dbReference>
<dbReference type="HAMAP" id="MF_00790">
    <property type="entry name" value="Lipase_chap"/>
    <property type="match status" value="1"/>
</dbReference>
<dbReference type="InterPro" id="IPR004961">
    <property type="entry name" value="Lipase_chaperone"/>
</dbReference>
<dbReference type="NCBIfam" id="NF002338">
    <property type="entry name" value="PRK01294.1-6"/>
    <property type="match status" value="1"/>
</dbReference>
<dbReference type="Pfam" id="PF03280">
    <property type="entry name" value="Lipase_chap"/>
    <property type="match status" value="1"/>
</dbReference>
<dbReference type="SUPFAM" id="SSF158855">
    <property type="entry name" value="Lipase chaperone-like"/>
    <property type="match status" value="1"/>
</dbReference>
<feature type="chain" id="PRO_0000218491" description="Lipase chaperone">
    <location>
        <begin position="1"/>
        <end position="353"/>
    </location>
</feature>
<feature type="transmembrane region" description="Helical" evidence="2">
    <location>
        <begin position="12"/>
        <end position="32"/>
    </location>
</feature>
<sequence>MIKKYSFVNHRIVLYLILGCVVVCGVWYSFDVRQAIDVGAVDLSLPQMSNNLLKEVAVGEGKTTNRLSRLPVDSTVPTVLPQSLAGSIAPPLPLDAYGHLARVSAVRDFFDYFLTAQNDLTPAALDEIVTHEIVKQLHGKSAQAEAQDVWTRYCAYFSQLVKLPDMGMVLGDKLDFVAVQRALDQRASLAVRTLGDWSEPFFGAEQQRQRYDLERLKIADDQALTDEQKKKRLVALEQKLPSKVQEERIKIQQQQDAVVKIIQLQKDEVTPDGIRLQVVGLLGPEVAYRVAEIRRQDEIWQEKYKHYAAQRAQRAQIEAQQLEPKEHDVQVENLRQRIFTKPGEALRAASLDQ</sequence>
<keyword id="KW-0997">Cell inner membrane</keyword>
<keyword id="KW-1003">Cell membrane</keyword>
<keyword id="KW-0143">Chaperone</keyword>
<keyword id="KW-0442">Lipid degradation</keyword>
<keyword id="KW-0443">Lipid metabolism</keyword>
<keyword id="KW-0472">Membrane</keyword>
<keyword id="KW-1185">Reference proteome</keyword>
<keyword id="KW-0812">Transmembrane</keyword>
<keyword id="KW-1133">Transmembrane helix</keyword>
<organism>
    <name type="scientific">Xylella fastidiosa (strain Temecula1 / ATCC 700964)</name>
    <dbReference type="NCBI Taxonomy" id="183190"/>
    <lineage>
        <taxon>Bacteria</taxon>
        <taxon>Pseudomonadati</taxon>
        <taxon>Pseudomonadota</taxon>
        <taxon>Gammaproteobacteria</taxon>
        <taxon>Lysobacterales</taxon>
        <taxon>Lysobacteraceae</taxon>
        <taxon>Xylella</taxon>
    </lineage>
</organism>
<evidence type="ECO:0000250" key="1"/>
<evidence type="ECO:0000255" key="2"/>
<evidence type="ECO:0000305" key="3"/>
<reference key="1">
    <citation type="journal article" date="2003" name="J. Bacteriol.">
        <title>Comparative analyses of the complete genome sequences of Pierce's disease and citrus variegated chlorosis strains of Xylella fastidiosa.</title>
        <authorList>
            <person name="Van Sluys M.A."/>
            <person name="de Oliveira M.C."/>
            <person name="Monteiro-Vitorello C.B."/>
            <person name="Miyaki C.Y."/>
            <person name="Furlan L.R."/>
            <person name="Camargo L.E.A."/>
            <person name="da Silva A.C.R."/>
            <person name="Moon D.H."/>
            <person name="Takita M.A."/>
            <person name="Lemos E.G.M."/>
            <person name="Machado M.A."/>
            <person name="Ferro M.I.T."/>
            <person name="da Silva F.R."/>
            <person name="Goldman M.H.S."/>
            <person name="Goldman G.H."/>
            <person name="Lemos M.V.F."/>
            <person name="El-Dorry H."/>
            <person name="Tsai S.M."/>
            <person name="Carrer H."/>
            <person name="Carraro D.M."/>
            <person name="de Oliveira R.C."/>
            <person name="Nunes L.R."/>
            <person name="Siqueira W.J."/>
            <person name="Coutinho L.L."/>
            <person name="Kimura E.T."/>
            <person name="Ferro E.S."/>
            <person name="Harakava R."/>
            <person name="Kuramae E.E."/>
            <person name="Marino C.L."/>
            <person name="Giglioti E."/>
            <person name="Abreu I.L."/>
            <person name="Alves L.M.C."/>
            <person name="do Amaral A.M."/>
            <person name="Baia G.S."/>
            <person name="Blanco S.R."/>
            <person name="Brito M.S."/>
            <person name="Cannavan F.S."/>
            <person name="Celestino A.V."/>
            <person name="da Cunha A.F."/>
            <person name="Fenille R.C."/>
            <person name="Ferro J.A."/>
            <person name="Formighieri E.F."/>
            <person name="Kishi L.T."/>
            <person name="Leoni S.G."/>
            <person name="Oliveira A.R."/>
            <person name="Rosa V.E. Jr."/>
            <person name="Sassaki F.T."/>
            <person name="Sena J.A.D."/>
            <person name="de Souza A.A."/>
            <person name="Truffi D."/>
            <person name="Tsukumo F."/>
            <person name="Yanai G.M."/>
            <person name="Zaros L.G."/>
            <person name="Civerolo E.L."/>
            <person name="Simpson A.J.G."/>
            <person name="Almeida N.F. Jr."/>
            <person name="Setubal J.C."/>
            <person name="Kitajima J.P."/>
        </authorList>
    </citation>
    <scope>NUCLEOTIDE SEQUENCE [LARGE SCALE GENOMIC DNA]</scope>
    <source>
        <strain>Temecula1 / ATCC 700964</strain>
    </source>
</reference>
<accession>Q87E55</accession>